<name>PILR1_LINPE</name>
<accession>A3R052</accession>
<protein>
    <recommendedName>
        <fullName>Bifunctional pinoresinol-lariciresinol reductase</fullName>
        <shortName>PLR-Lp1</shortName>
    </recommendedName>
    <alternativeName>
        <fullName>(+)-pinoresinol reductase</fullName>
        <ecNumber>1.23.1.1</ecNumber>
    </alternativeName>
    <alternativeName>
        <fullName>(-)-lariciresinol reductase</fullName>
        <ecNumber>1.23.1.4</ecNumber>
    </alternativeName>
</protein>
<gene>
    <name type="primary">PLR_Lp1</name>
</gene>
<sequence length="314" mass="35226">MKPCSVLVVGGTGYIGKRIVSASLYLGHDTYVLKRPGTGLDIEKLQLLLSFKKRGAHLVEASFSDHDSLVRAVRLVDVVICTMSGVHFRSHNILLQLKLVEAIKEAGNVKRFIPSEFGMDPARMGQAMEPGRETFDQKMVVRKAIEEANIPHTYISANCFAGYFVGNLSQLGTLTPPSDKVIIYGDGNVKVVYVDEDDVAKYTIKAIEDDRTVNKTVYLRPPENMMSQRELVAVWEKLSGNQLEKIELPPQDFLALMEGTTVAEQAGIGHFYHIFYEGCLTNFEINAENGEEEASRLYPEVEYTRVHDYLKIYL</sequence>
<comment type="function">
    <text evidence="3">Reductase involved in the lignan justicidin B biosynthesis. Catalyzes the enantioselective conversion of (+)-pinoresinol into (+)-lariciresinol and of (-)-lariciresinol into (+)-secoisolariciresinol. Low activity with the other enantiomers. Abstracts the 4R-hydride from the NADPH cofactor during catalysis.</text>
</comment>
<comment type="catalytic activity">
    <reaction evidence="3">
        <text>(+)-lariciresinol + NADP(+) = (+)-pinoresinol + NADPH + H(+)</text>
        <dbReference type="Rhea" id="RHEA:34419"/>
        <dbReference type="ChEBI" id="CHEBI:40"/>
        <dbReference type="ChEBI" id="CHEBI:15378"/>
        <dbReference type="ChEBI" id="CHEBI:57783"/>
        <dbReference type="ChEBI" id="CHEBI:58349"/>
        <dbReference type="ChEBI" id="CHEBI:67246"/>
        <dbReference type="EC" id="1.23.1.1"/>
    </reaction>
</comment>
<comment type="catalytic activity">
    <reaction evidence="3">
        <text>(+)-secoisolariciresinol + NADP(+) = (-)-lariciresinol + NADPH + H(+)</text>
        <dbReference type="Rhea" id="RHEA:34431"/>
        <dbReference type="ChEBI" id="CHEBI:15378"/>
        <dbReference type="ChEBI" id="CHEBI:57783"/>
        <dbReference type="ChEBI" id="CHEBI:58349"/>
        <dbReference type="ChEBI" id="CHEBI:67244"/>
        <dbReference type="ChEBI" id="CHEBI:67247"/>
        <dbReference type="EC" id="1.23.1.4"/>
    </reaction>
</comment>
<comment type="subunit">
    <text evidence="1">Dimer.</text>
</comment>
<comment type="miscellaneous">
    <text>Unlike most other PLRs, this enzyme has an opposite enantiospecificity within the two reaction steps.</text>
</comment>
<comment type="similarity">
    <text evidence="4">Belongs to the NmrA-type oxidoreductase family. Isoflavone reductase subfamily.</text>
</comment>
<proteinExistence type="evidence at protein level"/>
<evidence type="ECO:0000250" key="1"/>
<evidence type="ECO:0000250" key="2">
    <source>
        <dbReference type="UniProtKB" id="Q9LD14"/>
    </source>
</evidence>
<evidence type="ECO:0000269" key="3">
    <source>
    </source>
</evidence>
<evidence type="ECO:0000305" key="4"/>
<organism>
    <name type="scientific">Linum perenne</name>
    <name type="common">Perennial flax</name>
    <dbReference type="NCBI Taxonomy" id="35941"/>
    <lineage>
        <taxon>Eukaryota</taxon>
        <taxon>Viridiplantae</taxon>
        <taxon>Streptophyta</taxon>
        <taxon>Embryophyta</taxon>
        <taxon>Tracheophyta</taxon>
        <taxon>Spermatophyta</taxon>
        <taxon>Magnoliopsida</taxon>
        <taxon>eudicotyledons</taxon>
        <taxon>Gunneridae</taxon>
        <taxon>Pentapetalae</taxon>
        <taxon>rosids</taxon>
        <taxon>fabids</taxon>
        <taxon>Malpighiales</taxon>
        <taxon>Linaceae</taxon>
        <taxon>Linum</taxon>
    </lineage>
</organism>
<dbReference type="EC" id="1.23.1.1"/>
<dbReference type="EC" id="1.23.1.4"/>
<dbReference type="EMBL" id="EF050530">
    <property type="protein sequence ID" value="ABM68630.1"/>
    <property type="molecule type" value="mRNA"/>
</dbReference>
<dbReference type="SMR" id="A3R052"/>
<dbReference type="KEGG" id="ag:ABM68630"/>
<dbReference type="BioCyc" id="MetaCyc:MONOMER-16668"/>
<dbReference type="BRENDA" id="1.23.1.1">
    <property type="organism ID" value="13210"/>
</dbReference>
<dbReference type="BRENDA" id="1.23.1.4">
    <property type="organism ID" value="13210"/>
</dbReference>
<dbReference type="GO" id="GO:0010284">
    <property type="term" value="F:lariciresinol reductase activity"/>
    <property type="evidence" value="ECO:0000314"/>
    <property type="project" value="UniProtKB"/>
</dbReference>
<dbReference type="GO" id="GO:0010283">
    <property type="term" value="F:pinoresinol reductase activity"/>
    <property type="evidence" value="ECO:0000314"/>
    <property type="project" value="UniProtKB"/>
</dbReference>
<dbReference type="GO" id="GO:1902132">
    <property type="term" value="P:(+)-lariciresinol biosynthetic process"/>
    <property type="evidence" value="ECO:0000314"/>
    <property type="project" value="UniProtKB"/>
</dbReference>
<dbReference type="GO" id="GO:1902125">
    <property type="term" value="P:(+)-pinoresinol catabolic process"/>
    <property type="evidence" value="ECO:0000314"/>
    <property type="project" value="UniProtKB"/>
</dbReference>
<dbReference type="GO" id="GO:1902135">
    <property type="term" value="P:(+)-secoisolariciresinol biosynthetic process"/>
    <property type="evidence" value="ECO:0000314"/>
    <property type="project" value="UniProtKB"/>
</dbReference>
<dbReference type="GO" id="GO:1902128">
    <property type="term" value="P:(-)-lariciresinol catabolic process"/>
    <property type="evidence" value="ECO:0000314"/>
    <property type="project" value="UniProtKB"/>
</dbReference>
<dbReference type="GO" id="GO:0009807">
    <property type="term" value="P:lignan biosynthetic process"/>
    <property type="evidence" value="ECO:0000314"/>
    <property type="project" value="UniProtKB"/>
</dbReference>
<dbReference type="CDD" id="cd05259">
    <property type="entry name" value="PCBER_SDR_a"/>
    <property type="match status" value="1"/>
</dbReference>
<dbReference type="Gene3D" id="3.40.50.720">
    <property type="entry name" value="NAD(P)-binding Rossmann-like Domain"/>
    <property type="match status" value="1"/>
</dbReference>
<dbReference type="Gene3D" id="3.90.25.10">
    <property type="entry name" value="UDP-galactose 4-epimerase, domain 1"/>
    <property type="match status" value="1"/>
</dbReference>
<dbReference type="InterPro" id="IPR036291">
    <property type="entry name" value="NAD(P)-bd_dom_sf"/>
</dbReference>
<dbReference type="InterPro" id="IPR008030">
    <property type="entry name" value="NmrA-like"/>
</dbReference>
<dbReference type="InterPro" id="IPR050608">
    <property type="entry name" value="NmrA-type/Isoflavone_red_sf"/>
</dbReference>
<dbReference type="InterPro" id="IPR045312">
    <property type="entry name" value="PCBER-like"/>
</dbReference>
<dbReference type="PANTHER" id="PTHR43349:SF4">
    <property type="entry name" value="PINORESINOL REDUCTASE 1-RELATED"/>
    <property type="match status" value="1"/>
</dbReference>
<dbReference type="PANTHER" id="PTHR43349">
    <property type="entry name" value="PINORESINOL REDUCTASE-RELATED"/>
    <property type="match status" value="1"/>
</dbReference>
<dbReference type="Pfam" id="PF05368">
    <property type="entry name" value="NmrA"/>
    <property type="match status" value="1"/>
</dbReference>
<dbReference type="SUPFAM" id="SSF51735">
    <property type="entry name" value="NAD(P)-binding Rossmann-fold domains"/>
    <property type="match status" value="1"/>
</dbReference>
<reference key="1">
    <citation type="journal article" date="2007" name="FEBS Lett.">
        <title>(+)-Pinoresinol/(-)-lariciresinol reductase from Linum perenne Himmelszelt involved in the biosynthesis of justicidin B.</title>
        <authorList>
            <person name="Hemmati S."/>
            <person name="Schmidt T.J."/>
            <person name="Fuss E."/>
        </authorList>
    </citation>
    <scope>NUCLEOTIDE SEQUENCE [MRNA]</scope>
    <scope>FUNCTION</scope>
    <scope>CATALYTIC ACTIVITY</scope>
</reference>
<feature type="initiator methionine" description="Removed" evidence="1">
    <location>
        <position position="1"/>
    </location>
</feature>
<feature type="chain" id="PRO_0000422928" description="Bifunctional pinoresinol-lariciresinol reductase">
    <location>
        <begin position="2"/>
        <end position="314"/>
    </location>
</feature>
<feature type="active site" description="Proton acceptor" evidence="2">
    <location>
        <position position="138"/>
    </location>
</feature>
<feature type="binding site" evidence="2">
    <location>
        <begin position="10"/>
        <end position="16"/>
    </location>
    <ligand>
        <name>NADP(+)</name>
        <dbReference type="ChEBI" id="CHEBI:58349"/>
    </ligand>
</feature>
<feature type="binding site" evidence="2">
    <location>
        <position position="35"/>
    </location>
    <ligand>
        <name>NADP(+)</name>
        <dbReference type="ChEBI" id="CHEBI:58349"/>
    </ligand>
</feature>
<feature type="binding site" evidence="2">
    <location>
        <position position="44"/>
    </location>
    <ligand>
        <name>NADP(+)</name>
        <dbReference type="ChEBI" id="CHEBI:58349"/>
    </ligand>
</feature>
<feature type="binding site" evidence="2">
    <location>
        <position position="142"/>
    </location>
    <ligand>
        <name>NADP(+)</name>
        <dbReference type="ChEBI" id="CHEBI:58349"/>
    </ligand>
</feature>
<feature type="binding site" evidence="2">
    <location>
        <position position="270"/>
    </location>
    <ligand>
        <name>substrate</name>
    </ligand>
</feature>
<keyword id="KW-0521">NADP</keyword>
<keyword id="KW-0560">Oxidoreductase</keyword>